<name>CMIP1_HUMAN</name>
<proteinExistence type="evidence at protein level"/>
<protein>
    <recommendedName>
        <fullName evidence="3">Ciliary microtubule inner protein 1</fullName>
    </recommendedName>
</protein>
<gene>
    <name evidence="4" type="primary">CIMIP1</name>
    <name type="synonym">C20orf85</name>
    <name evidence="2" type="synonym">LLC1</name>
</gene>
<sequence>MAQKPLSTAAAERMNLVGQDEIWKYRLKAESEARQNWPQNWGFLTTPFEELIKCEEDLPTPKPKIELPERFRIRPVTPVEKYIKVFPSPPVPQTTQGFIGWRSAVPGLNKCLELDDAIRSCKGAFARELCWPKQGVH</sequence>
<feature type="chain" id="PRO_0000079448" description="Ciliary microtubule inner protein 1">
    <location>
        <begin position="1"/>
        <end position="137"/>
    </location>
</feature>
<feature type="sequence variant" id="VAR_033759" description="In dbSNP:rs16984945.">
    <original>R</original>
    <variation>H</variation>
    <location>
        <position position="26"/>
    </location>
</feature>
<feature type="sequence variant" id="VAR_061632" description="In dbSNP:rs45576936.">
    <original>R</original>
    <variation>Q</variation>
    <location>
        <position position="34"/>
    </location>
</feature>
<feature type="sequence variant" id="VAR_033760" description="In dbSNP:rs17440813.">
    <original>I</original>
    <variation>V</variation>
    <location>
        <position position="99"/>
    </location>
</feature>
<reference key="1">
    <citation type="journal article" date="2001" name="Nature">
        <title>The DNA sequence and comparative analysis of human chromosome 20.</title>
        <authorList>
            <person name="Deloukas P."/>
            <person name="Matthews L.H."/>
            <person name="Ashurst J.L."/>
            <person name="Burton J."/>
            <person name="Gilbert J.G.R."/>
            <person name="Jones M."/>
            <person name="Stavrides G."/>
            <person name="Almeida J.P."/>
            <person name="Babbage A.K."/>
            <person name="Bagguley C.L."/>
            <person name="Bailey J."/>
            <person name="Barlow K.F."/>
            <person name="Bates K.N."/>
            <person name="Beard L.M."/>
            <person name="Beare D.M."/>
            <person name="Beasley O.P."/>
            <person name="Bird C.P."/>
            <person name="Blakey S.E."/>
            <person name="Bridgeman A.M."/>
            <person name="Brown A.J."/>
            <person name="Buck D."/>
            <person name="Burrill W.D."/>
            <person name="Butler A.P."/>
            <person name="Carder C."/>
            <person name="Carter N.P."/>
            <person name="Chapman J.C."/>
            <person name="Clamp M."/>
            <person name="Clark G."/>
            <person name="Clark L.N."/>
            <person name="Clark S.Y."/>
            <person name="Clee C.M."/>
            <person name="Clegg S."/>
            <person name="Cobley V.E."/>
            <person name="Collier R.E."/>
            <person name="Connor R.E."/>
            <person name="Corby N.R."/>
            <person name="Coulson A."/>
            <person name="Coville G.J."/>
            <person name="Deadman R."/>
            <person name="Dhami P.D."/>
            <person name="Dunn M."/>
            <person name="Ellington A.G."/>
            <person name="Frankland J.A."/>
            <person name="Fraser A."/>
            <person name="French L."/>
            <person name="Garner P."/>
            <person name="Grafham D.V."/>
            <person name="Griffiths C."/>
            <person name="Griffiths M.N.D."/>
            <person name="Gwilliam R."/>
            <person name="Hall R.E."/>
            <person name="Hammond S."/>
            <person name="Harley J.L."/>
            <person name="Heath P.D."/>
            <person name="Ho S."/>
            <person name="Holden J.L."/>
            <person name="Howden P.J."/>
            <person name="Huckle E."/>
            <person name="Hunt A.R."/>
            <person name="Hunt S.E."/>
            <person name="Jekosch K."/>
            <person name="Johnson C.M."/>
            <person name="Johnson D."/>
            <person name="Kay M.P."/>
            <person name="Kimberley A.M."/>
            <person name="King A."/>
            <person name="Knights A."/>
            <person name="Laird G.K."/>
            <person name="Lawlor S."/>
            <person name="Lehvaeslaiho M.H."/>
            <person name="Leversha M.A."/>
            <person name="Lloyd C."/>
            <person name="Lloyd D.M."/>
            <person name="Lovell J.D."/>
            <person name="Marsh V.L."/>
            <person name="Martin S.L."/>
            <person name="McConnachie L.J."/>
            <person name="McLay K."/>
            <person name="McMurray A.A."/>
            <person name="Milne S.A."/>
            <person name="Mistry D."/>
            <person name="Moore M.J.F."/>
            <person name="Mullikin J.C."/>
            <person name="Nickerson T."/>
            <person name="Oliver K."/>
            <person name="Parker A."/>
            <person name="Patel R."/>
            <person name="Pearce T.A.V."/>
            <person name="Peck A.I."/>
            <person name="Phillimore B.J.C.T."/>
            <person name="Prathalingam S.R."/>
            <person name="Plumb R.W."/>
            <person name="Ramsay H."/>
            <person name="Rice C.M."/>
            <person name="Ross M.T."/>
            <person name="Scott C.E."/>
            <person name="Sehra H.K."/>
            <person name="Shownkeen R."/>
            <person name="Sims S."/>
            <person name="Skuce C.D."/>
            <person name="Smith M.L."/>
            <person name="Soderlund C."/>
            <person name="Steward C.A."/>
            <person name="Sulston J.E."/>
            <person name="Swann R.M."/>
            <person name="Sycamore N."/>
            <person name="Taylor R."/>
            <person name="Tee L."/>
            <person name="Thomas D.W."/>
            <person name="Thorpe A."/>
            <person name="Tracey A."/>
            <person name="Tromans A.C."/>
            <person name="Vaudin M."/>
            <person name="Wall M."/>
            <person name="Wallis J.M."/>
            <person name="Whitehead S.L."/>
            <person name="Whittaker P."/>
            <person name="Willey D.L."/>
            <person name="Williams L."/>
            <person name="Williams S.A."/>
            <person name="Wilming L."/>
            <person name="Wray P.W."/>
            <person name="Hubbard T."/>
            <person name="Durbin R.M."/>
            <person name="Bentley D.R."/>
            <person name="Beck S."/>
            <person name="Rogers J."/>
        </authorList>
    </citation>
    <scope>NUCLEOTIDE SEQUENCE [LARGE SCALE GENOMIC DNA]</scope>
</reference>
<reference key="2">
    <citation type="journal article" date="2004" name="Genome Res.">
        <title>The status, quality, and expansion of the NIH full-length cDNA project: the Mammalian Gene Collection (MGC).</title>
        <authorList>
            <consortium name="The MGC Project Team"/>
        </authorList>
    </citation>
    <scope>NUCLEOTIDE SEQUENCE [LARGE SCALE MRNA]</scope>
    <source>
        <tissue>Brain</tissue>
    </source>
</reference>
<reference key="3">
    <citation type="journal article" date="2015" name="Histol. Histopathol.">
        <title>Immunohistochemical localization of LLC1 in human tissues and its limited expression in non-small cell lung cancer.</title>
        <authorList>
            <person name="Chandra V."/>
            <person name="Choi Y.B."/>
            <person name="Hwang H.L."/>
            <person name="Lee J.H."/>
            <person name="Park S.Y."/>
            <person name="Kim H.K."/>
            <person name="Poojan S."/>
            <person name="Koh J.S."/>
            <person name="Kim H.S."/>
            <person name="Hong K.M."/>
        </authorList>
    </citation>
    <scope>SUBCELLULAR LOCATION</scope>
    <scope>TISSUE SPECIFICITY</scope>
    <scope>DEVELOPMENTAL STAGE</scope>
</reference>
<accession>Q9H1P6</accession>
<evidence type="ECO:0000269" key="1">
    <source>
    </source>
</evidence>
<evidence type="ECO:0000303" key="2">
    <source>
    </source>
</evidence>
<evidence type="ECO:0000305" key="3"/>
<evidence type="ECO:0000312" key="4">
    <source>
        <dbReference type="HGNC" id="HGNC:16216"/>
    </source>
</evidence>
<keyword id="KW-0966">Cell projection</keyword>
<keyword id="KW-1267">Proteomics identification</keyword>
<keyword id="KW-1185">Reference proteome</keyword>
<dbReference type="EMBL" id="AL354776">
    <property type="status" value="NOT_ANNOTATED_CDS"/>
    <property type="molecule type" value="Genomic_DNA"/>
</dbReference>
<dbReference type="EMBL" id="BC035405">
    <property type="protein sequence ID" value="AAH35405.1"/>
    <property type="molecule type" value="mRNA"/>
</dbReference>
<dbReference type="CCDS" id="CCDS13465.1"/>
<dbReference type="RefSeq" id="NP_848551.1">
    <property type="nucleotide sequence ID" value="NM_178456.3"/>
</dbReference>
<dbReference type="SMR" id="Q9H1P6"/>
<dbReference type="BioGRID" id="126134">
    <property type="interactions" value="28"/>
</dbReference>
<dbReference type="FunCoup" id="Q9H1P6">
    <property type="interactions" value="10"/>
</dbReference>
<dbReference type="IntAct" id="Q9H1P6">
    <property type="interactions" value="23"/>
</dbReference>
<dbReference type="STRING" id="9606.ENSP00000360210"/>
<dbReference type="iPTMnet" id="Q9H1P6"/>
<dbReference type="PhosphoSitePlus" id="Q9H1P6"/>
<dbReference type="BioMuta" id="C20orf85"/>
<dbReference type="MassIVE" id="Q9H1P6"/>
<dbReference type="PaxDb" id="9606-ENSP00000360210"/>
<dbReference type="PeptideAtlas" id="Q9H1P6"/>
<dbReference type="ProteomicsDB" id="80436"/>
<dbReference type="Antibodypedia" id="70475">
    <property type="antibodies" value="11 antibodies from 4 providers"/>
</dbReference>
<dbReference type="DNASU" id="128602"/>
<dbReference type="Ensembl" id="ENST00000371168.4">
    <property type="protein sequence ID" value="ENSP00000360210.3"/>
    <property type="gene ID" value="ENSG00000124237.6"/>
</dbReference>
<dbReference type="GeneID" id="128602"/>
<dbReference type="KEGG" id="hsa:128602"/>
<dbReference type="MANE-Select" id="ENST00000371168.4">
    <property type="protein sequence ID" value="ENSP00000360210.3"/>
    <property type="RefSeq nucleotide sequence ID" value="NM_178456.3"/>
    <property type="RefSeq protein sequence ID" value="NP_848551.1"/>
</dbReference>
<dbReference type="UCSC" id="uc002xyv.4">
    <property type="organism name" value="human"/>
</dbReference>
<dbReference type="AGR" id="HGNC:16216"/>
<dbReference type="CTD" id="128602"/>
<dbReference type="DisGeNET" id="128602"/>
<dbReference type="GeneCards" id="CIMIP1"/>
<dbReference type="HGNC" id="HGNC:16216">
    <property type="gene designation" value="CIMIP1"/>
</dbReference>
<dbReference type="HPA" id="ENSG00000124237">
    <property type="expression patterns" value="Tissue enriched (fallopian)"/>
</dbReference>
<dbReference type="MIM" id="619277">
    <property type="type" value="gene"/>
</dbReference>
<dbReference type="neXtProt" id="NX_Q9H1P6"/>
<dbReference type="OpenTargets" id="ENSG00000124237"/>
<dbReference type="PharmGKB" id="PA25793"/>
<dbReference type="VEuPathDB" id="HostDB:ENSG00000124237"/>
<dbReference type="eggNOG" id="ENOG502S4TU">
    <property type="taxonomic scope" value="Eukaryota"/>
</dbReference>
<dbReference type="GeneTree" id="ENSGT00940000154459"/>
<dbReference type="HOGENOM" id="CLU_125517_0_0_1"/>
<dbReference type="InParanoid" id="Q9H1P6"/>
<dbReference type="OMA" id="QIWKDHI"/>
<dbReference type="OrthoDB" id="10031946at2759"/>
<dbReference type="PAN-GO" id="Q9H1P6">
    <property type="GO annotations" value="0 GO annotations based on evolutionary models"/>
</dbReference>
<dbReference type="PhylomeDB" id="Q9H1P6"/>
<dbReference type="TreeFam" id="TF329228"/>
<dbReference type="PathwayCommons" id="Q9H1P6"/>
<dbReference type="SignaLink" id="Q9H1P6"/>
<dbReference type="BioGRID-ORCS" id="128602">
    <property type="hits" value="37 hits in 1118 CRISPR screens"/>
</dbReference>
<dbReference type="GenomeRNAi" id="128602"/>
<dbReference type="Pharos" id="Q9H1P6">
    <property type="development level" value="Tdark"/>
</dbReference>
<dbReference type="PRO" id="PR:Q9H1P6"/>
<dbReference type="Proteomes" id="UP000005640">
    <property type="component" value="Chromosome 20"/>
</dbReference>
<dbReference type="RNAct" id="Q9H1P6">
    <property type="molecule type" value="protein"/>
</dbReference>
<dbReference type="Bgee" id="ENSG00000124237">
    <property type="expression patterns" value="Expressed in bronchial epithelial cell and 79 other cell types or tissues"/>
</dbReference>
<dbReference type="GO" id="GO:0005929">
    <property type="term" value="C:cilium"/>
    <property type="evidence" value="ECO:0000314"/>
    <property type="project" value="UniProtKB"/>
</dbReference>
<dbReference type="InterPro" id="IPR020339">
    <property type="entry name" value="C20orf85-like"/>
</dbReference>
<dbReference type="PANTHER" id="PTHR31909">
    <property type="entry name" value="CHROMOSOME 20 ORF85 FAMILY MEMBER"/>
    <property type="match status" value="1"/>
</dbReference>
<dbReference type="PANTHER" id="PTHR31909:SF3">
    <property type="entry name" value="SIMILAR TO PROTEIN C20ORF85 HOMOLOG"/>
    <property type="match status" value="1"/>
</dbReference>
<dbReference type="Pfam" id="PF14945">
    <property type="entry name" value="LLC1"/>
    <property type="match status" value="1"/>
</dbReference>
<comment type="interaction">
    <interactant intactId="EBI-12155483">
        <id>Q9H1P6</id>
    </interactant>
    <interactant intactId="EBI-2880652">
        <id>Q08043</id>
        <label>ACTN3</label>
    </interactant>
    <organismsDiffer>false</organismsDiffer>
    <experiments>3</experiments>
</comment>
<comment type="interaction">
    <interactant intactId="EBI-12155483">
        <id>Q9H1P6</id>
    </interactant>
    <interactant intactId="EBI-2878075">
        <id>Q9BT30</id>
        <label>ALKBH7</label>
    </interactant>
    <organismsDiffer>false</organismsDiffer>
    <experiments>3</experiments>
</comment>
<comment type="interaction">
    <interactant intactId="EBI-12155483">
        <id>Q9H1P6</id>
    </interactant>
    <interactant intactId="EBI-19946665">
        <id>Q86U10</id>
        <label>ASPG</label>
    </interactant>
    <organismsDiffer>false</organismsDiffer>
    <experiments>3</experiments>
</comment>
<comment type="interaction">
    <interactant intactId="EBI-12155483">
        <id>Q9H1P6</id>
    </interactant>
    <interactant intactId="EBI-12011224">
        <id>Q9NPB3</id>
        <label>CABP2</label>
    </interactant>
    <organismsDiffer>false</organismsDiffer>
    <experiments>3</experiments>
</comment>
<comment type="interaction">
    <interactant intactId="EBI-12155483">
        <id>Q9H1P6</id>
    </interactant>
    <interactant intactId="EBI-1184651">
        <id>P54284</id>
        <label>CACNB3</label>
    </interactant>
    <organismsDiffer>false</organismsDiffer>
    <experiments>3</experiments>
</comment>
<comment type="interaction">
    <interactant intactId="EBI-12155483">
        <id>Q9H1P6</id>
    </interactant>
    <interactant intactId="EBI-12007726">
        <id>O14936-4</id>
        <label>CASK</label>
    </interactant>
    <organismsDiffer>false</organismsDiffer>
    <experiments>3</experiments>
</comment>
<comment type="interaction">
    <interactant intactId="EBI-12155483">
        <id>Q9H1P6</id>
    </interactant>
    <interactant intactId="EBI-743033">
        <id>Q9NZN8</id>
        <label>CNOT2</label>
    </interactant>
    <organismsDiffer>false</organismsDiffer>
    <experiments>3</experiments>
</comment>
<comment type="interaction">
    <interactant intactId="EBI-12155483">
        <id>Q9H1P6</id>
    </interactant>
    <interactant intactId="EBI-740376">
        <id>Q86UW9</id>
        <label>DTX2</label>
    </interactant>
    <organismsDiffer>false</organismsDiffer>
    <experiments>3</experiments>
</comment>
<comment type="interaction">
    <interactant intactId="EBI-12155483">
        <id>Q9H1P6</id>
    </interactant>
    <interactant intactId="EBI-743105">
        <id>Q5JVL4</id>
        <label>EFHC1</label>
    </interactant>
    <organismsDiffer>false</organismsDiffer>
    <experiments>3</experiments>
</comment>
<comment type="interaction">
    <interactant intactId="EBI-12155483">
        <id>Q9H1P6</id>
    </interactant>
    <interactant intactId="EBI-701903">
        <id>Q14192</id>
        <label>FHL2</label>
    </interactant>
    <organismsDiffer>false</organismsDiffer>
    <experiments>3</experiments>
</comment>
<comment type="interaction">
    <interactant intactId="EBI-12155483">
        <id>Q9H1P6</id>
    </interactant>
    <interactant intactId="EBI-746999">
        <id>O95198</id>
        <label>KLHL2</label>
    </interactant>
    <organismsDiffer>false</organismsDiffer>
    <experiments>3</experiments>
</comment>
<comment type="interaction">
    <interactant intactId="EBI-12155483">
        <id>Q9H1P6</id>
    </interactant>
    <interactant intactId="EBI-10693436">
        <id>Q9BS75</id>
        <label>KLHL20</label>
    </interactant>
    <organismsDiffer>false</organismsDiffer>
    <experiments>3</experiments>
</comment>
<comment type="interaction">
    <interactant intactId="EBI-12155483">
        <id>Q9H1P6</id>
    </interactant>
    <interactant intactId="EBI-12805508">
        <id>Q3LI70</id>
        <label>KRTAP19-6</label>
    </interactant>
    <organismsDiffer>false</organismsDiffer>
    <experiments>3</experiments>
</comment>
<comment type="interaction">
    <interactant intactId="EBI-12155483">
        <id>Q9H1P6</id>
    </interactant>
    <interactant intactId="EBI-9996449">
        <id>Q9BYR8</id>
        <label>KRTAP3-1</label>
    </interactant>
    <organismsDiffer>false</organismsDiffer>
    <experiments>3</experiments>
</comment>
<comment type="interaction">
    <interactant intactId="EBI-12155483">
        <id>Q9H1P6</id>
    </interactant>
    <interactant intactId="EBI-11962084">
        <id>Q3LI66</id>
        <label>KRTAP6-2</label>
    </interactant>
    <organismsDiffer>false</organismsDiffer>
    <experiments>3</experiments>
</comment>
<comment type="interaction">
    <interactant intactId="EBI-12155483">
        <id>Q9H1P6</id>
    </interactant>
    <interactant intactId="EBI-10261141">
        <id>Q8IUC2</id>
        <label>KRTAP8-1</label>
    </interactant>
    <organismsDiffer>false</organismsDiffer>
    <experiments>3</experiments>
</comment>
<comment type="interaction">
    <interactant intactId="EBI-12155483">
        <id>Q9H1P6</id>
    </interactant>
    <interactant intactId="EBI-11911016">
        <id>P80188</id>
        <label>LCN2</label>
    </interactant>
    <organismsDiffer>false</organismsDiffer>
    <experiments>3</experiments>
</comment>
<comment type="interaction">
    <interactant intactId="EBI-12155483">
        <id>Q9H1P6</id>
    </interactant>
    <interactant intactId="EBI-77889">
        <id>Q9UI95</id>
        <label>MAD2L2</label>
    </interactant>
    <organismsDiffer>false</organismsDiffer>
    <experiments>3</experiments>
</comment>
<comment type="interaction">
    <interactant intactId="EBI-12155483">
        <id>Q9H1P6</id>
    </interactant>
    <interactant intactId="EBI-536879">
        <id>O43482</id>
        <label>OIP5</label>
    </interactant>
    <organismsDiffer>false</organismsDiffer>
    <experiments>3</experiments>
</comment>
<comment type="interaction">
    <interactant intactId="EBI-12155483">
        <id>Q9H1P6</id>
    </interactant>
    <interactant intactId="EBI-357275">
        <id>Q99471</id>
        <label>PFDN5</label>
    </interactant>
    <organismsDiffer>false</organismsDiffer>
    <experiments>3</experiments>
</comment>
<comment type="interaction">
    <interactant intactId="EBI-12155483">
        <id>Q9H1P6</id>
    </interactant>
    <interactant intactId="EBI-740343">
        <id>Q93062-3</id>
        <label>RBPMS</label>
    </interactant>
    <organismsDiffer>false</organismsDiffer>
    <experiments>3</experiments>
</comment>
<comment type="interaction">
    <interactant intactId="EBI-12155483">
        <id>Q9H1P6</id>
    </interactant>
    <interactant intactId="EBI-948354">
        <id>Q6DKK2</id>
        <label>TTC19</label>
    </interactant>
    <organismsDiffer>false</organismsDiffer>
    <experiments>3</experiments>
</comment>
<comment type="subcellular location">
    <subcellularLocation>
        <location evidence="1">Cell projection</location>
        <location evidence="1">Cilium</location>
    </subcellularLocation>
</comment>
<comment type="tissue specificity">
    <text evidence="1">Expressed in airway epithelial cells, renal tubular cells, pancreatic acinar cells and epithelial cells of the stomach, duodenum, and gallbladder (at protein level).</text>
</comment>
<comment type="developmental stage">
    <text evidence="1">Expression increases in the cilia of the embryonic lung from 14 weeks of gestation.</text>
</comment>
<organism>
    <name type="scientific">Homo sapiens</name>
    <name type="common">Human</name>
    <dbReference type="NCBI Taxonomy" id="9606"/>
    <lineage>
        <taxon>Eukaryota</taxon>
        <taxon>Metazoa</taxon>
        <taxon>Chordata</taxon>
        <taxon>Craniata</taxon>
        <taxon>Vertebrata</taxon>
        <taxon>Euteleostomi</taxon>
        <taxon>Mammalia</taxon>
        <taxon>Eutheria</taxon>
        <taxon>Euarchontoglires</taxon>
        <taxon>Primates</taxon>
        <taxon>Haplorrhini</taxon>
        <taxon>Catarrhini</taxon>
        <taxon>Hominidae</taxon>
        <taxon>Homo</taxon>
    </lineage>
</organism>